<keyword id="KW-0002">3D-structure</keyword>
<keyword id="KW-0539">Nucleus</keyword>
<keyword id="KW-0597">Phosphoprotein</keyword>
<keyword id="KW-1185">Reference proteome</keyword>
<keyword id="KW-0694">RNA-binding</keyword>
<dbReference type="EMBL" id="U05314">
    <property type="protein sequence ID" value="AAA81910.1"/>
    <property type="molecule type" value="Genomic_DNA"/>
</dbReference>
<dbReference type="EMBL" id="D37935">
    <property type="protein sequence ID" value="BAA07154.1"/>
    <property type="molecule type" value="Genomic_DNA"/>
</dbReference>
<dbReference type="EMBL" id="Z73546">
    <property type="protein sequence ID" value="CAA97903.1"/>
    <property type="molecule type" value="Genomic_DNA"/>
</dbReference>
<dbReference type="EMBL" id="BK006949">
    <property type="protein sequence ID" value="DAA11244.1"/>
    <property type="molecule type" value="Genomic_DNA"/>
</dbReference>
<dbReference type="PIR" id="S48529">
    <property type="entry name" value="S48529"/>
</dbReference>
<dbReference type="RefSeq" id="NP_015134.1">
    <property type="nucleotide sequence ID" value="NM_001184004.1"/>
</dbReference>
<dbReference type="PDB" id="2KVI">
    <property type="method" value="NMR"/>
    <property type="chains" value="A=321-415"/>
</dbReference>
<dbReference type="PDB" id="2L41">
    <property type="method" value="NMR"/>
    <property type="chains" value="A=328-404"/>
</dbReference>
<dbReference type="PDB" id="2XNQ">
    <property type="method" value="X-ray"/>
    <property type="resolution" value="1.30 A"/>
    <property type="chains" value="A=329-404"/>
</dbReference>
<dbReference type="PDB" id="2XNR">
    <property type="method" value="X-ray"/>
    <property type="resolution" value="1.60 A"/>
    <property type="chains" value="A=329-404"/>
</dbReference>
<dbReference type="PDB" id="7PRD">
    <property type="method" value="NMR"/>
    <property type="chains" value="A=202-261"/>
</dbReference>
<dbReference type="PDB" id="7PRE">
    <property type="method" value="NMR"/>
    <property type="chains" value="A=203-250"/>
</dbReference>
<dbReference type="PDBsum" id="2KVI"/>
<dbReference type="PDBsum" id="2L41"/>
<dbReference type="PDBsum" id="2XNQ"/>
<dbReference type="PDBsum" id="2XNR"/>
<dbReference type="PDBsum" id="7PRD"/>
<dbReference type="PDBsum" id="7PRE"/>
<dbReference type="BMRB" id="P38996"/>
<dbReference type="SMR" id="P38996"/>
<dbReference type="BioGRID" id="35993">
    <property type="interactions" value="625"/>
</dbReference>
<dbReference type="ComplexPortal" id="CPX-1316">
    <property type="entry name" value="NRD1 snoRNA termination complex"/>
</dbReference>
<dbReference type="DIP" id="DIP-3980N"/>
<dbReference type="FunCoup" id="P38996">
    <property type="interactions" value="451"/>
</dbReference>
<dbReference type="IntAct" id="P38996">
    <property type="interactions" value="24"/>
</dbReference>
<dbReference type="MINT" id="P38996"/>
<dbReference type="STRING" id="4932.YPL190C"/>
<dbReference type="iPTMnet" id="P38996"/>
<dbReference type="PaxDb" id="4932-YPL190C"/>
<dbReference type="PeptideAtlas" id="P38996"/>
<dbReference type="EnsemblFungi" id="YPL190C_mRNA">
    <property type="protein sequence ID" value="YPL190C"/>
    <property type="gene ID" value="YPL190C"/>
</dbReference>
<dbReference type="GeneID" id="855911"/>
<dbReference type="KEGG" id="sce:YPL190C"/>
<dbReference type="AGR" id="SGD:S000006111"/>
<dbReference type="SGD" id="S000006111">
    <property type="gene designation" value="NAB3"/>
</dbReference>
<dbReference type="VEuPathDB" id="FungiDB:YPL190C"/>
<dbReference type="eggNOG" id="KOG0118">
    <property type="taxonomic scope" value="Eukaryota"/>
</dbReference>
<dbReference type="HOGENOM" id="CLU_016358_0_0_1"/>
<dbReference type="InParanoid" id="P38996"/>
<dbReference type="OMA" id="NKITEMH"/>
<dbReference type="OrthoDB" id="10044938at2759"/>
<dbReference type="BioCyc" id="YEAST:G3O-34083-MONOMER"/>
<dbReference type="Reactome" id="R-SCE-4570464">
    <property type="pathway name" value="SUMOylation of RNA binding proteins"/>
</dbReference>
<dbReference type="Reactome" id="R-SCE-72203">
    <property type="pathway name" value="Processing of Capped Intron-Containing Pre-mRNA"/>
</dbReference>
<dbReference type="BioGRID-ORCS" id="855911">
    <property type="hits" value="9 hits in 10 CRISPR screens"/>
</dbReference>
<dbReference type="CD-CODE" id="21740CDC">
    <property type="entry name" value="NAB3 nuclear body"/>
</dbReference>
<dbReference type="CD-CODE" id="E03F929F">
    <property type="entry name" value="Stress granule"/>
</dbReference>
<dbReference type="EvolutionaryTrace" id="P38996"/>
<dbReference type="PRO" id="PR:P38996"/>
<dbReference type="Proteomes" id="UP000002311">
    <property type="component" value="Chromosome XVI"/>
</dbReference>
<dbReference type="RNAct" id="P38996">
    <property type="molecule type" value="protein"/>
</dbReference>
<dbReference type="GO" id="GO:0005737">
    <property type="term" value="C:cytoplasm"/>
    <property type="evidence" value="ECO:0000314"/>
    <property type="project" value="SGD"/>
</dbReference>
<dbReference type="GO" id="GO:0035649">
    <property type="term" value="C:Nrd1 complex"/>
    <property type="evidence" value="ECO:0000314"/>
    <property type="project" value="SGD"/>
</dbReference>
<dbReference type="GO" id="GO:0005654">
    <property type="term" value="C:nucleoplasm"/>
    <property type="evidence" value="ECO:0007669"/>
    <property type="project" value="UniProtKB-SubCell"/>
</dbReference>
<dbReference type="GO" id="GO:0005634">
    <property type="term" value="C:nucleus"/>
    <property type="evidence" value="ECO:0000314"/>
    <property type="project" value="SGD"/>
</dbReference>
<dbReference type="GO" id="GO:0003729">
    <property type="term" value="F:mRNA binding"/>
    <property type="evidence" value="ECO:0007005"/>
    <property type="project" value="SGD"/>
</dbReference>
<dbReference type="GO" id="GO:0003723">
    <property type="term" value="F:RNA binding"/>
    <property type="evidence" value="ECO:0000314"/>
    <property type="project" value="SGD"/>
</dbReference>
<dbReference type="GO" id="GO:0001068">
    <property type="term" value="F:transcription regulatory region RNA binding"/>
    <property type="evidence" value="ECO:0000314"/>
    <property type="project" value="SGD"/>
</dbReference>
<dbReference type="GO" id="GO:0071041">
    <property type="term" value="P:antisense RNA transcript catabolic process"/>
    <property type="evidence" value="ECO:0000314"/>
    <property type="project" value="SGD"/>
</dbReference>
<dbReference type="GO" id="GO:0071034">
    <property type="term" value="P:CUT catabolic process"/>
    <property type="evidence" value="ECO:0000315"/>
    <property type="project" value="SGD"/>
</dbReference>
<dbReference type="GO" id="GO:0031124">
    <property type="term" value="P:mRNA 3'-end processing"/>
    <property type="evidence" value="ECO:0000315"/>
    <property type="project" value="SGD"/>
</dbReference>
<dbReference type="GO" id="GO:0071028">
    <property type="term" value="P:nuclear mRNA surveillance"/>
    <property type="evidence" value="ECO:0000315"/>
    <property type="project" value="SGD"/>
</dbReference>
<dbReference type="GO" id="GO:0031126">
    <property type="term" value="P:sno(s)RNA 3'-end processing"/>
    <property type="evidence" value="ECO:0000315"/>
    <property type="project" value="SGD"/>
</dbReference>
<dbReference type="GO" id="GO:0034472">
    <property type="term" value="P:snRNA 3'-end processing"/>
    <property type="evidence" value="ECO:0000315"/>
    <property type="project" value="SGD"/>
</dbReference>
<dbReference type="GO" id="GO:0030847">
    <property type="term" value="P:termination of RNA polymerase II transcription, exosome-dependent"/>
    <property type="evidence" value="ECO:0000314"/>
    <property type="project" value="SGD"/>
</dbReference>
<dbReference type="GO" id="GO:0042780">
    <property type="term" value="P:tRNA 3'-end processing"/>
    <property type="evidence" value="ECO:0000315"/>
    <property type="project" value="SGD"/>
</dbReference>
<dbReference type="CDD" id="cd12342">
    <property type="entry name" value="RRM_Nab3p"/>
    <property type="match status" value="1"/>
</dbReference>
<dbReference type="Gene3D" id="3.30.70.330">
    <property type="match status" value="1"/>
</dbReference>
<dbReference type="Gene3D" id="3.40.50.800">
    <property type="entry name" value="Anticodon-binding domain"/>
    <property type="match status" value="1"/>
</dbReference>
<dbReference type="InterPro" id="IPR036621">
    <property type="entry name" value="Anticodon-bd_dom_sf"/>
</dbReference>
<dbReference type="InterPro" id="IPR034167">
    <property type="entry name" value="Nab3_RRM"/>
</dbReference>
<dbReference type="InterPro" id="IPR012677">
    <property type="entry name" value="Nucleotide-bd_a/b_plait_sf"/>
</dbReference>
<dbReference type="InterPro" id="IPR035979">
    <property type="entry name" value="RBD_domain_sf"/>
</dbReference>
<dbReference type="InterPro" id="IPR000504">
    <property type="entry name" value="RRM_dom"/>
</dbReference>
<dbReference type="InterPro" id="IPR051186">
    <property type="entry name" value="RRM_HNRPC/RALY_subfam"/>
</dbReference>
<dbReference type="PANTHER" id="PTHR13968">
    <property type="entry name" value="HETEROGENEOUS NUCLEAR RIBONUCLEOPROTEIN"/>
    <property type="match status" value="1"/>
</dbReference>
<dbReference type="PANTHER" id="PTHR13968:SF26">
    <property type="entry name" value="RRM DOMAIN-CONTAINING PROTEIN"/>
    <property type="match status" value="1"/>
</dbReference>
<dbReference type="Pfam" id="PF00076">
    <property type="entry name" value="RRM_1"/>
    <property type="match status" value="1"/>
</dbReference>
<dbReference type="SMART" id="SM00360">
    <property type="entry name" value="RRM"/>
    <property type="match status" value="1"/>
</dbReference>
<dbReference type="SUPFAM" id="SSF52954">
    <property type="entry name" value="Class II aaRS ABD-related"/>
    <property type="match status" value="1"/>
</dbReference>
<dbReference type="SUPFAM" id="SSF54928">
    <property type="entry name" value="RNA-binding domain, RBD"/>
    <property type="match status" value="1"/>
</dbReference>
<dbReference type="PROSITE" id="PS50102">
    <property type="entry name" value="RRM"/>
    <property type="match status" value="1"/>
</dbReference>
<proteinExistence type="evidence at protein level"/>
<evidence type="ECO:0000255" key="1">
    <source>
        <dbReference type="PROSITE-ProRule" id="PRU00176"/>
    </source>
</evidence>
<evidence type="ECO:0000256" key="2">
    <source>
        <dbReference type="SAM" id="MobiDB-lite"/>
    </source>
</evidence>
<evidence type="ECO:0000269" key="3">
    <source>
    </source>
</evidence>
<evidence type="ECO:0000269" key="4">
    <source>
    </source>
</evidence>
<evidence type="ECO:0000269" key="5">
    <source>
    </source>
</evidence>
<evidence type="ECO:0000305" key="6"/>
<evidence type="ECO:0007744" key="7">
    <source>
    </source>
</evidence>
<evidence type="ECO:0007744" key="8">
    <source>
    </source>
</evidence>
<evidence type="ECO:0007829" key="9">
    <source>
        <dbReference type="PDB" id="2KVI"/>
    </source>
</evidence>
<evidence type="ECO:0007829" key="10">
    <source>
        <dbReference type="PDB" id="2XNQ"/>
    </source>
</evidence>
<evidence type="ECO:0007829" key="11">
    <source>
        <dbReference type="PDB" id="2XNR"/>
    </source>
</evidence>
<evidence type="ECO:0007829" key="12">
    <source>
        <dbReference type="PDB" id="7PRD"/>
    </source>
</evidence>
<organism>
    <name type="scientific">Saccharomyces cerevisiae (strain ATCC 204508 / S288c)</name>
    <name type="common">Baker's yeast</name>
    <dbReference type="NCBI Taxonomy" id="559292"/>
    <lineage>
        <taxon>Eukaryota</taxon>
        <taxon>Fungi</taxon>
        <taxon>Dikarya</taxon>
        <taxon>Ascomycota</taxon>
        <taxon>Saccharomycotina</taxon>
        <taxon>Saccharomycetes</taxon>
        <taxon>Saccharomycetales</taxon>
        <taxon>Saccharomycetaceae</taxon>
        <taxon>Saccharomyces</taxon>
    </lineage>
</organism>
<accession>P38996</accession>
<accession>D6W3H8</accession>
<accession>Q07034</accession>
<reference key="1">
    <citation type="journal article" date="1994" name="J. Cell Biol.">
        <title>Characterization of nuclear polyadenylated RNA-binding proteins in Saccharomyces cerevisiae.</title>
        <authorList>
            <person name="Wilson S.M."/>
            <person name="Datar K.V."/>
            <person name="Paddy M.R."/>
            <person name="Swedlow J.R."/>
            <person name="Swanson M.S."/>
        </authorList>
    </citation>
    <scope>NUCLEOTIDE SEQUENCE [GENOMIC DNA]</scope>
    <scope>SUBCELLULAR LOCATION</scope>
    <scope>BINDING TO POLYADENYLATED RNA</scope>
</reference>
<reference key="2">
    <citation type="journal article" date="1995" name="Mol. Gen. Genet.">
        <title>Dosage suppressors of the dominant G1 cyclin mutant CLN3-2: identification of a yeast gene encoding a putative RNA/ssDNA binding protein.</title>
        <authorList>
            <person name="Sugimoto K."/>
            <person name="Matsumoto K."/>
            <person name="Kornberg R.D."/>
            <person name="Reed S.I."/>
            <person name="Wittenberg C."/>
        </authorList>
    </citation>
    <scope>NUCLEOTIDE SEQUENCE [GENOMIC DNA]</scope>
    <scope>FUNCTION</scope>
</reference>
<reference key="3">
    <citation type="journal article" date="1997" name="Nature">
        <title>The nucleotide sequence of Saccharomyces cerevisiae chromosome XVI.</title>
        <authorList>
            <person name="Bussey H."/>
            <person name="Storms R.K."/>
            <person name="Ahmed A."/>
            <person name="Albermann K."/>
            <person name="Allen E."/>
            <person name="Ansorge W."/>
            <person name="Araujo R."/>
            <person name="Aparicio A."/>
            <person name="Barrell B.G."/>
            <person name="Badcock K."/>
            <person name="Benes V."/>
            <person name="Botstein D."/>
            <person name="Bowman S."/>
            <person name="Brueckner M."/>
            <person name="Carpenter J."/>
            <person name="Cherry J.M."/>
            <person name="Chung E."/>
            <person name="Churcher C.M."/>
            <person name="Coster F."/>
            <person name="Davis K."/>
            <person name="Davis R.W."/>
            <person name="Dietrich F.S."/>
            <person name="Delius H."/>
            <person name="DiPaolo T."/>
            <person name="Dubois E."/>
            <person name="Duesterhoeft A."/>
            <person name="Duncan M."/>
            <person name="Floeth M."/>
            <person name="Fortin N."/>
            <person name="Friesen J.D."/>
            <person name="Fritz C."/>
            <person name="Goffeau A."/>
            <person name="Hall J."/>
            <person name="Hebling U."/>
            <person name="Heumann K."/>
            <person name="Hilbert H."/>
            <person name="Hillier L.W."/>
            <person name="Hunicke-Smith S."/>
            <person name="Hyman R.W."/>
            <person name="Johnston M."/>
            <person name="Kalman S."/>
            <person name="Kleine K."/>
            <person name="Komp C."/>
            <person name="Kurdi O."/>
            <person name="Lashkari D."/>
            <person name="Lew H."/>
            <person name="Lin A."/>
            <person name="Lin D."/>
            <person name="Louis E.J."/>
            <person name="Marathe R."/>
            <person name="Messenguy F."/>
            <person name="Mewes H.-W."/>
            <person name="Mirtipati S."/>
            <person name="Moestl D."/>
            <person name="Mueller-Auer S."/>
            <person name="Namath A."/>
            <person name="Nentwich U."/>
            <person name="Oefner P."/>
            <person name="Pearson D."/>
            <person name="Petel F.X."/>
            <person name="Pohl T.M."/>
            <person name="Purnelle B."/>
            <person name="Rajandream M.A."/>
            <person name="Rechmann S."/>
            <person name="Rieger M."/>
            <person name="Riles L."/>
            <person name="Roberts D."/>
            <person name="Schaefer M."/>
            <person name="Scharfe M."/>
            <person name="Scherens B."/>
            <person name="Schramm S."/>
            <person name="Schroeder M."/>
            <person name="Sdicu A.-M."/>
            <person name="Tettelin H."/>
            <person name="Urrestarazu L.A."/>
            <person name="Ushinsky S."/>
            <person name="Vierendeels F."/>
            <person name="Vissers S."/>
            <person name="Voss H."/>
            <person name="Walsh S.V."/>
            <person name="Wambutt R."/>
            <person name="Wang Y."/>
            <person name="Wedler E."/>
            <person name="Wedler H."/>
            <person name="Winnett E."/>
            <person name="Zhong W.-W."/>
            <person name="Zollner A."/>
            <person name="Vo D.H."/>
            <person name="Hani J."/>
        </authorList>
    </citation>
    <scope>NUCLEOTIDE SEQUENCE [LARGE SCALE GENOMIC DNA]</scope>
    <source>
        <strain>ATCC 204508 / S288c</strain>
    </source>
</reference>
<reference key="4">
    <citation type="journal article" date="2014" name="G3 (Bethesda)">
        <title>The reference genome sequence of Saccharomyces cerevisiae: Then and now.</title>
        <authorList>
            <person name="Engel S.R."/>
            <person name="Dietrich F.S."/>
            <person name="Fisk D.G."/>
            <person name="Binkley G."/>
            <person name="Balakrishnan R."/>
            <person name="Costanzo M.C."/>
            <person name="Dwight S.S."/>
            <person name="Hitz B.C."/>
            <person name="Karra K."/>
            <person name="Nash R.S."/>
            <person name="Weng S."/>
            <person name="Wong E.D."/>
            <person name="Lloyd P."/>
            <person name="Skrzypek M.S."/>
            <person name="Miyasato S.R."/>
            <person name="Simison M."/>
            <person name="Cherry J.M."/>
        </authorList>
    </citation>
    <scope>GENOME REANNOTATION</scope>
    <source>
        <strain>ATCC 204508 / S288c</strain>
    </source>
</reference>
<reference key="5">
    <citation type="journal article" date="2003" name="Nature">
        <title>Global analysis of protein expression in yeast.</title>
        <authorList>
            <person name="Ghaemmaghami S."/>
            <person name="Huh W.-K."/>
            <person name="Bower K."/>
            <person name="Howson R.W."/>
            <person name="Belle A."/>
            <person name="Dephoure N."/>
            <person name="O'Shea E.K."/>
            <person name="Weissman J.S."/>
        </authorList>
    </citation>
    <scope>LEVEL OF PROTEIN EXPRESSION [LARGE SCALE ANALYSIS]</scope>
</reference>
<reference key="6">
    <citation type="journal article" date="2007" name="J. Proteome Res.">
        <title>Large-scale phosphorylation analysis of alpha-factor-arrested Saccharomyces cerevisiae.</title>
        <authorList>
            <person name="Li X."/>
            <person name="Gerber S.A."/>
            <person name="Rudner A.D."/>
            <person name="Beausoleil S.A."/>
            <person name="Haas W."/>
            <person name="Villen J."/>
            <person name="Elias J.E."/>
            <person name="Gygi S.P."/>
        </authorList>
    </citation>
    <scope>PHOSPHORYLATION [LARGE SCALE ANALYSIS] AT THR-86 AND THR-451</scope>
    <scope>IDENTIFICATION BY MASS SPECTROMETRY [LARGE SCALE ANALYSIS]</scope>
    <source>
        <strain>ADR376</strain>
    </source>
</reference>
<reference key="7">
    <citation type="journal article" date="2009" name="Science">
        <title>Global analysis of Cdk1 substrate phosphorylation sites provides insights into evolution.</title>
        <authorList>
            <person name="Holt L.J."/>
            <person name="Tuch B.B."/>
            <person name="Villen J."/>
            <person name="Johnson A.D."/>
            <person name="Gygi S.P."/>
            <person name="Morgan D.O."/>
        </authorList>
    </citation>
    <scope>PHOSPHORYLATION [LARGE SCALE ANALYSIS] AT THR-86 AND THR-451</scope>
    <scope>IDENTIFICATION BY MASS SPECTROMETRY [LARGE SCALE ANALYSIS]</scope>
</reference>
<protein>
    <recommendedName>
        <fullName>Nuclear polyadenylated RNA-binding protein 3</fullName>
    </recommendedName>
</protein>
<feature type="chain" id="PRO_0000081657" description="Nuclear polyadenylated RNA-binding protein 3">
    <location>
        <begin position="1"/>
        <end position="802"/>
    </location>
</feature>
<feature type="domain" description="RRM" evidence="1">
    <location>
        <begin position="330"/>
        <end position="401"/>
    </location>
</feature>
<feature type="region of interest" description="Disordered" evidence="2">
    <location>
        <begin position="1"/>
        <end position="174"/>
    </location>
</feature>
<feature type="region of interest" description="Disordered" evidence="2">
    <location>
        <begin position="252"/>
        <end position="293"/>
    </location>
</feature>
<feature type="region of interest" description="Disordered" evidence="2">
    <location>
        <begin position="571"/>
        <end position="675"/>
    </location>
</feature>
<feature type="region of interest" description="Disordered" evidence="2">
    <location>
        <begin position="717"/>
        <end position="802"/>
    </location>
</feature>
<feature type="compositionally biased region" description="Low complexity" evidence="2">
    <location>
        <begin position="22"/>
        <end position="34"/>
    </location>
</feature>
<feature type="compositionally biased region" description="Acidic residues" evidence="2">
    <location>
        <begin position="37"/>
        <end position="73"/>
    </location>
</feature>
<feature type="compositionally biased region" description="Acidic residues" evidence="2">
    <location>
        <begin position="101"/>
        <end position="139"/>
    </location>
</feature>
<feature type="compositionally biased region" description="Acidic residues" evidence="2">
    <location>
        <begin position="149"/>
        <end position="158"/>
    </location>
</feature>
<feature type="compositionally biased region" description="Basic and acidic residues" evidence="2">
    <location>
        <begin position="159"/>
        <end position="174"/>
    </location>
</feature>
<feature type="compositionally biased region" description="Low complexity" evidence="2">
    <location>
        <begin position="260"/>
        <end position="276"/>
    </location>
</feature>
<feature type="compositionally biased region" description="Basic and acidic residues" evidence="2">
    <location>
        <begin position="277"/>
        <end position="293"/>
    </location>
</feature>
<feature type="compositionally biased region" description="Pro residues" evidence="2">
    <location>
        <begin position="575"/>
        <end position="590"/>
    </location>
</feature>
<feature type="compositionally biased region" description="Low complexity" evidence="2">
    <location>
        <begin position="593"/>
        <end position="614"/>
    </location>
</feature>
<feature type="compositionally biased region" description="Polar residues" evidence="2">
    <location>
        <begin position="632"/>
        <end position="642"/>
    </location>
</feature>
<feature type="compositionally biased region" description="Low complexity" evidence="2">
    <location>
        <begin position="651"/>
        <end position="661"/>
    </location>
</feature>
<feature type="compositionally biased region" description="Low complexity" evidence="2">
    <location>
        <begin position="717"/>
        <end position="738"/>
    </location>
</feature>
<feature type="compositionally biased region" description="Polar residues" evidence="2">
    <location>
        <begin position="745"/>
        <end position="754"/>
    </location>
</feature>
<feature type="compositionally biased region" description="Pro residues" evidence="2">
    <location>
        <begin position="757"/>
        <end position="769"/>
    </location>
</feature>
<feature type="compositionally biased region" description="Low complexity" evidence="2">
    <location>
        <begin position="770"/>
        <end position="785"/>
    </location>
</feature>
<feature type="modified residue" description="Phosphothreonine" evidence="7 8">
    <location>
        <position position="86"/>
    </location>
</feature>
<feature type="modified residue" description="Phosphothreonine" evidence="7 8">
    <location>
        <position position="451"/>
    </location>
</feature>
<feature type="sequence conflict" description="In Ref. 2; BAA07154." evidence="6" ref="2">
    <original>N</original>
    <variation>I</variation>
    <location>
        <position position="341"/>
    </location>
</feature>
<feature type="helix" evidence="12">
    <location>
        <begin position="208"/>
        <end position="221"/>
    </location>
</feature>
<feature type="turn" evidence="12">
    <location>
        <begin position="222"/>
        <end position="225"/>
    </location>
</feature>
<feature type="helix" evidence="12">
    <location>
        <begin position="227"/>
        <end position="231"/>
    </location>
</feature>
<feature type="helix" evidence="12">
    <location>
        <begin position="234"/>
        <end position="245"/>
    </location>
</feature>
<feature type="helix" evidence="12">
    <location>
        <begin position="252"/>
        <end position="254"/>
    </location>
</feature>
<feature type="strand" evidence="10">
    <location>
        <begin position="331"/>
        <end position="336"/>
    </location>
</feature>
<feature type="strand" evidence="11">
    <location>
        <begin position="339"/>
        <end position="341"/>
    </location>
</feature>
<feature type="helix" evidence="10">
    <location>
        <begin position="344"/>
        <end position="351"/>
    </location>
</feature>
<feature type="helix" evidence="10">
    <location>
        <begin position="352"/>
        <end position="354"/>
    </location>
</feature>
<feature type="strand" evidence="10">
    <location>
        <begin position="357"/>
        <end position="362"/>
    </location>
</feature>
<feature type="strand" evidence="10">
    <location>
        <begin position="364"/>
        <end position="373"/>
    </location>
</feature>
<feature type="helix" evidence="10">
    <location>
        <begin position="374"/>
        <end position="384"/>
    </location>
</feature>
<feature type="strand" evidence="10">
    <location>
        <begin position="387"/>
        <end position="389"/>
    </location>
</feature>
<feature type="turn" evidence="9">
    <location>
        <begin position="391"/>
        <end position="393"/>
    </location>
</feature>
<feature type="strand" evidence="10">
    <location>
        <begin position="395"/>
        <end position="398"/>
    </location>
</feature>
<sequence>MSDENHNSDVQDIPSPELSVDSNSNENELMNNSSADDGIEFDAPEEEREAEREEENEEQHELEDVNDEEEEDKEEKGEENGEVINTEEEEEEEHQQKGGNDDDDDDNEEEEEEEEDDDDDDDDDDDDEEEEEEEEEEGNDNSSVGSDSAAEDGEDEEDKKDKTKDKEVELRRETLEKEQKDVDEAIKKITREENDNTHFPTNMENVNYDLLQKQVKYIMDSNMLNLPQFQHLPQEEKMSAILAMLNSNSDTALSVPPHDSTISTTASASATSGARSNDQRKPPLSDAQRRMRFPRADLSKPITEEEHDRYAAYLHGENKITEMHNIPPKSRLFIGNLPLKNVSKEDLFRIFSPYGHIMQINIKNAFGFIQFDNPQSVRDAIECESQEMNFGKKLILEVSSSNARPQFDHGDHGTNSSSTFISSAKRPFQTESGDMYNDDNGAGYKKSRRHTVSCNIFVKRTADRTYAIEVFNRFRDGTGLETDMIFLKPRMELGKLINDAAYNGVWGVVLVNKTHNVDVQTFYKGSQGETKFDEYISISADDAVAIFNNIKNNRNNSRPTDYRAMSHQQNIYGAPPLPVPNGPAVGPPPQTNYYQGYSMPPPQQQQQQPYGNYGMPPPSHDQGYGSQPPIPMNQSYGRYQTSIPPPPPQQQIPQGYGRYQAGPPPQPPSQTPMDQQQLLSAIQNLPPNVVSNLLSMAQQQQQQPHAQQQLVGLIQSMQGQAPQQQQQQLGGYSSMNSSSPPPMSTNYNGQNISAKPSAPPMSHQPPPPQQQQQQQQQQQQQQQQPAGNNVQSLLDSLAKLQK</sequence>
<gene>
    <name type="primary">NAB3</name>
    <name type="synonym">HMD1</name>
    <name type="ordered locus">YPL190C</name>
</gene>
<name>NAB3_YEAST</name>
<comment type="function">
    <text evidence="4">May be required for packaging pre-mRNAs into ribonucleoprotein structures amenable to efficient nuclear RNA processing. Binds to poly(A)+ RNA. Appears to act in the maintenance of CLN3 mRNA levels.</text>
</comment>
<comment type="interaction">
    <interactant intactId="EBI-11776">
        <id>P38996</id>
    </interactant>
    <interactant intactId="EBI-12228">
        <id>P53617</id>
        <label>NRD1</label>
    </interactant>
    <organismsDiffer>false</organismsDiffer>
    <experiments>8</experiments>
</comment>
<comment type="interaction">
    <interactant intactId="EBI-11776">
        <id>P38996</id>
    </interactant>
    <interactant intactId="EBI-16945">
        <id>Q00416</id>
        <label>SEN1</label>
    </interactant>
    <organismsDiffer>false</organismsDiffer>
    <experiments>5</experiments>
</comment>
<comment type="subcellular location">
    <subcellularLocation>
        <location evidence="5">Nucleus</location>
        <location evidence="5">Nucleoplasm</location>
    </subcellularLocation>
</comment>
<comment type="miscellaneous">
    <text evidence="3">Present with 5830 molecules/cell in log phase SD medium.</text>
</comment>